<keyword id="KW-0030">Aminoacyl-tRNA synthetase</keyword>
<keyword id="KW-0067">ATP-binding</keyword>
<keyword id="KW-0963">Cytoplasm</keyword>
<keyword id="KW-0436">Ligase</keyword>
<keyword id="KW-0479">Metal-binding</keyword>
<keyword id="KW-0547">Nucleotide-binding</keyword>
<keyword id="KW-0648">Protein biosynthesis</keyword>
<keyword id="KW-1185">Reference proteome</keyword>
<keyword id="KW-0862">Zinc</keyword>
<name>SYC_BUCAI</name>
<accession>P57558</accession>
<protein>
    <recommendedName>
        <fullName>Cysteine--tRNA ligase</fullName>
        <ecNumber>6.1.1.16</ecNumber>
    </recommendedName>
    <alternativeName>
        <fullName>Cysteinyl-tRNA synthetase</fullName>
        <shortName>CysRS</shortName>
    </alternativeName>
</protein>
<proteinExistence type="inferred from homology"/>
<gene>
    <name type="primary">cysS</name>
    <name type="ordered locus">BU487</name>
</gene>
<comment type="catalytic activity">
    <reaction>
        <text>tRNA(Cys) + L-cysteine + ATP = L-cysteinyl-tRNA(Cys) + AMP + diphosphate</text>
        <dbReference type="Rhea" id="RHEA:17773"/>
        <dbReference type="Rhea" id="RHEA-COMP:9661"/>
        <dbReference type="Rhea" id="RHEA-COMP:9679"/>
        <dbReference type="ChEBI" id="CHEBI:30616"/>
        <dbReference type="ChEBI" id="CHEBI:33019"/>
        <dbReference type="ChEBI" id="CHEBI:35235"/>
        <dbReference type="ChEBI" id="CHEBI:78442"/>
        <dbReference type="ChEBI" id="CHEBI:78517"/>
        <dbReference type="ChEBI" id="CHEBI:456215"/>
        <dbReference type="EC" id="6.1.1.16"/>
    </reaction>
</comment>
<comment type="cofactor">
    <cofactor evidence="1">
        <name>Zn(2+)</name>
        <dbReference type="ChEBI" id="CHEBI:29105"/>
    </cofactor>
    <text evidence="1">Binds 1 zinc ion per subunit.</text>
</comment>
<comment type="subunit">
    <text evidence="1">Monomer.</text>
</comment>
<comment type="subcellular location">
    <subcellularLocation>
        <location evidence="1">Cytoplasm</location>
    </subcellularLocation>
</comment>
<comment type="similarity">
    <text evidence="2">Belongs to the class-I aminoacyl-tRNA synthetase family.</text>
</comment>
<reference key="1">
    <citation type="journal article" date="2000" name="Nature">
        <title>Genome sequence of the endocellular bacterial symbiont of aphids Buchnera sp. APS.</title>
        <authorList>
            <person name="Shigenobu S."/>
            <person name="Watanabe H."/>
            <person name="Hattori M."/>
            <person name="Sakaki Y."/>
            <person name="Ishikawa H."/>
        </authorList>
    </citation>
    <scope>NUCLEOTIDE SEQUENCE [LARGE SCALE GENOMIC DNA]</scope>
    <source>
        <strain>APS</strain>
    </source>
</reference>
<feature type="chain" id="PRO_0000159366" description="Cysteine--tRNA ligase">
    <location>
        <begin position="1"/>
        <end position="464"/>
    </location>
</feature>
<feature type="short sequence motif" description="'HIGH' region">
    <location>
        <begin position="30"/>
        <end position="40"/>
    </location>
</feature>
<feature type="short sequence motif" description="'KMSKS' region">
    <location>
        <begin position="266"/>
        <end position="270"/>
    </location>
</feature>
<feature type="binding site" evidence="1">
    <location>
        <position position="28"/>
    </location>
    <ligand>
        <name>Zn(2+)</name>
        <dbReference type="ChEBI" id="CHEBI:29105"/>
    </ligand>
</feature>
<feature type="binding site" evidence="1">
    <location>
        <position position="209"/>
    </location>
    <ligand>
        <name>Zn(2+)</name>
        <dbReference type="ChEBI" id="CHEBI:29105"/>
    </ligand>
</feature>
<feature type="binding site" evidence="1">
    <location>
        <position position="234"/>
    </location>
    <ligand>
        <name>Zn(2+)</name>
        <dbReference type="ChEBI" id="CHEBI:29105"/>
    </ligand>
</feature>
<feature type="binding site" evidence="1">
    <location>
        <position position="238"/>
    </location>
    <ligand>
        <name>Zn(2+)</name>
        <dbReference type="ChEBI" id="CHEBI:29105"/>
    </ligand>
</feature>
<feature type="binding site" evidence="1">
    <location>
        <position position="269"/>
    </location>
    <ligand>
        <name>ATP</name>
        <dbReference type="ChEBI" id="CHEBI:30616"/>
    </ligand>
</feature>
<dbReference type="EC" id="6.1.1.16"/>
<dbReference type="EMBL" id="BA000003">
    <property type="protein sequence ID" value="BAB13183.1"/>
    <property type="molecule type" value="Genomic_DNA"/>
</dbReference>
<dbReference type="RefSeq" id="NP_240297.1">
    <property type="nucleotide sequence ID" value="NC_002528.1"/>
</dbReference>
<dbReference type="RefSeq" id="WP_010896141.1">
    <property type="nucleotide sequence ID" value="NZ_AP036055.1"/>
</dbReference>
<dbReference type="SMR" id="P57558"/>
<dbReference type="STRING" id="563178.BUAP5A_480"/>
<dbReference type="EnsemblBacteria" id="BAB13183">
    <property type="protein sequence ID" value="BAB13183"/>
    <property type="gene ID" value="BAB13183"/>
</dbReference>
<dbReference type="KEGG" id="buc:BU487"/>
<dbReference type="PATRIC" id="fig|107806.10.peg.495"/>
<dbReference type="eggNOG" id="COG0215">
    <property type="taxonomic scope" value="Bacteria"/>
</dbReference>
<dbReference type="HOGENOM" id="CLU_013528_0_1_6"/>
<dbReference type="Proteomes" id="UP000001806">
    <property type="component" value="Chromosome"/>
</dbReference>
<dbReference type="GO" id="GO:0005829">
    <property type="term" value="C:cytosol"/>
    <property type="evidence" value="ECO:0007669"/>
    <property type="project" value="TreeGrafter"/>
</dbReference>
<dbReference type="GO" id="GO:0005524">
    <property type="term" value="F:ATP binding"/>
    <property type="evidence" value="ECO:0007669"/>
    <property type="project" value="UniProtKB-UniRule"/>
</dbReference>
<dbReference type="GO" id="GO:0004817">
    <property type="term" value="F:cysteine-tRNA ligase activity"/>
    <property type="evidence" value="ECO:0007669"/>
    <property type="project" value="UniProtKB-UniRule"/>
</dbReference>
<dbReference type="GO" id="GO:0008270">
    <property type="term" value="F:zinc ion binding"/>
    <property type="evidence" value="ECO:0007669"/>
    <property type="project" value="UniProtKB-UniRule"/>
</dbReference>
<dbReference type="GO" id="GO:0006423">
    <property type="term" value="P:cysteinyl-tRNA aminoacylation"/>
    <property type="evidence" value="ECO:0007669"/>
    <property type="project" value="UniProtKB-UniRule"/>
</dbReference>
<dbReference type="CDD" id="cd07963">
    <property type="entry name" value="Anticodon_Ia_Cys"/>
    <property type="match status" value="1"/>
</dbReference>
<dbReference type="CDD" id="cd00672">
    <property type="entry name" value="CysRS_core"/>
    <property type="match status" value="1"/>
</dbReference>
<dbReference type="FunFam" id="3.40.50.620:FF:000009">
    <property type="entry name" value="Cysteine--tRNA ligase"/>
    <property type="match status" value="1"/>
</dbReference>
<dbReference type="Gene3D" id="1.20.120.1910">
    <property type="entry name" value="Cysteine-tRNA ligase, C-terminal anti-codon recognition domain"/>
    <property type="match status" value="1"/>
</dbReference>
<dbReference type="Gene3D" id="3.40.50.620">
    <property type="entry name" value="HUPs"/>
    <property type="match status" value="1"/>
</dbReference>
<dbReference type="HAMAP" id="MF_00041">
    <property type="entry name" value="Cys_tRNA_synth"/>
    <property type="match status" value="1"/>
</dbReference>
<dbReference type="InterPro" id="IPR015803">
    <property type="entry name" value="Cys-tRNA-ligase"/>
</dbReference>
<dbReference type="InterPro" id="IPR015273">
    <property type="entry name" value="Cys-tRNA-synt_Ia_DALR"/>
</dbReference>
<dbReference type="InterPro" id="IPR024909">
    <property type="entry name" value="Cys-tRNA/MSH_ligase"/>
</dbReference>
<dbReference type="InterPro" id="IPR014729">
    <property type="entry name" value="Rossmann-like_a/b/a_fold"/>
</dbReference>
<dbReference type="InterPro" id="IPR032678">
    <property type="entry name" value="tRNA-synt_1_cat_dom"/>
</dbReference>
<dbReference type="InterPro" id="IPR009080">
    <property type="entry name" value="tRNAsynth_Ia_anticodon-bd"/>
</dbReference>
<dbReference type="NCBIfam" id="TIGR00435">
    <property type="entry name" value="cysS"/>
    <property type="match status" value="1"/>
</dbReference>
<dbReference type="PANTHER" id="PTHR10890:SF3">
    <property type="entry name" value="CYSTEINE--TRNA LIGASE, CYTOPLASMIC"/>
    <property type="match status" value="1"/>
</dbReference>
<dbReference type="PANTHER" id="PTHR10890">
    <property type="entry name" value="CYSTEINYL-TRNA SYNTHETASE"/>
    <property type="match status" value="1"/>
</dbReference>
<dbReference type="Pfam" id="PF09190">
    <property type="entry name" value="DALR_2"/>
    <property type="match status" value="1"/>
</dbReference>
<dbReference type="Pfam" id="PF01406">
    <property type="entry name" value="tRNA-synt_1e"/>
    <property type="match status" value="1"/>
</dbReference>
<dbReference type="PRINTS" id="PR00983">
    <property type="entry name" value="TRNASYNTHCYS"/>
</dbReference>
<dbReference type="SMART" id="SM00840">
    <property type="entry name" value="DALR_2"/>
    <property type="match status" value="1"/>
</dbReference>
<dbReference type="SUPFAM" id="SSF47323">
    <property type="entry name" value="Anticodon-binding domain of a subclass of class I aminoacyl-tRNA synthetases"/>
    <property type="match status" value="1"/>
</dbReference>
<dbReference type="SUPFAM" id="SSF52374">
    <property type="entry name" value="Nucleotidylyl transferase"/>
    <property type="match status" value="1"/>
</dbReference>
<sequence>MLKIFNTLTSTKEIFTPIKKNRVNLYVCGVTVYDFCHIGHGRTFVVFDMIVRYLRFSGFQVKYVRNITDIDDKIISKSTKEKKKINTFTASMIKEMHKDFDLLGISVPDEEPRVTDYIDNIIRIITTLIKKKHAYIHKNGDVIFSIDSDPNYGTLSRQSLTSLESGSRIPLNNMKKNPLDFILWKSSNKEEYSWDSPWGKGRPGWHIECSAITNVFFNNSIDIHGGGSDLLFPHHENERSQSICFNNKSMINFWMHTGMVILNNKKMSKSLGNVYFLRNILKDCDAEVLRYFFLSTHYRHPIYYCEKNLDQAYTSLKYLYTALYDTNPFFNNEEGLNFELEFYNAMNDDFNTPAVFSIFFKIARKINFLKNKDILKTNKFAFRLKYLANNLGFLFQDPKEFLQKKTTLNLLTLKEIQLLIEKRNIARQSKLWQEADNIRKKLMSLDIILEDLPDKTIWRKNKKS</sequence>
<evidence type="ECO:0000250" key="1"/>
<evidence type="ECO:0000305" key="2"/>
<organism>
    <name type="scientific">Buchnera aphidicola subsp. Acyrthosiphon pisum (strain APS)</name>
    <name type="common">Acyrthosiphon pisum symbiotic bacterium</name>
    <dbReference type="NCBI Taxonomy" id="107806"/>
    <lineage>
        <taxon>Bacteria</taxon>
        <taxon>Pseudomonadati</taxon>
        <taxon>Pseudomonadota</taxon>
        <taxon>Gammaproteobacteria</taxon>
        <taxon>Enterobacterales</taxon>
        <taxon>Erwiniaceae</taxon>
        <taxon>Buchnera</taxon>
    </lineage>
</organism>